<gene>
    <name evidence="1" type="primary">proS</name>
    <name type="ordered locus">YPDSF_1643</name>
</gene>
<reference key="1">
    <citation type="submission" date="2007-02" db="EMBL/GenBank/DDBJ databases">
        <title>Complete sequence of chromosome of Yersinia pestis Pestoides F.</title>
        <authorList>
            <consortium name="US DOE Joint Genome Institute"/>
            <person name="Copeland A."/>
            <person name="Lucas S."/>
            <person name="Lapidus A."/>
            <person name="Barry K."/>
            <person name="Detter J.C."/>
            <person name="Glavina del Rio T."/>
            <person name="Hammon N."/>
            <person name="Israni S."/>
            <person name="Dalin E."/>
            <person name="Tice H."/>
            <person name="Pitluck S."/>
            <person name="Di Bartolo G."/>
            <person name="Chain P."/>
            <person name="Malfatti S."/>
            <person name="Shin M."/>
            <person name="Vergez L."/>
            <person name="Schmutz J."/>
            <person name="Larimer F."/>
            <person name="Land M."/>
            <person name="Hauser L."/>
            <person name="Worsham P."/>
            <person name="Chu M."/>
            <person name="Bearden S."/>
            <person name="Garcia E."/>
            <person name="Richardson P."/>
        </authorList>
    </citation>
    <scope>NUCLEOTIDE SEQUENCE [LARGE SCALE GENOMIC DNA]</scope>
    <source>
        <strain>Pestoides F</strain>
    </source>
</reference>
<protein>
    <recommendedName>
        <fullName evidence="1">Proline--tRNA ligase</fullName>
        <ecNumber evidence="1">6.1.1.15</ecNumber>
    </recommendedName>
    <alternativeName>
        <fullName evidence="1">Prolyl-tRNA synthetase</fullName>
        <shortName evidence="1">ProRS</shortName>
    </alternativeName>
</protein>
<sequence>MRTSQYLLSTQKETPADAEVISHQLMLRAGMIRKLASGLYTWLPTGVRVLKKVENIVREEMNNAGAIEVSMPVVQPADLWQESGRWEQYGPELLRFVDRGERPFVLGPTHEEVITDLIRGEINSYKQLPLNFFQIQTKFRDEVRPRFGVMRAREFLMKDAYSFHTTQESLQETYDAMYTAYSKIFSRMDLNFRAVLADTGSIGGSASHEFQVLAESGEDDIVFSTGSDYAANIEFAEALAPTEPRAPATEELRIVDTPNAKTIAELVEQFKLPIEKTVKTLLVHAHEESGHKLVALLVRGDHDLNEIKAEKLPQVAKPLTFASEEEIRAAIGAGPGSLGPVNLSLPVIADRSVAVMSDFGAGANIDGKHYFGINWERDLALPLVADLRNVVEGDISPDGKGTLQIKRGIEVGHIFQLGTKYSEVMKATVQGEDGRNQVMTMGCYGIGVSRVVAAAIEQNHDDRGIIWPDAIAPFQVAILPMNMHKSFRVKELAEELYTTLRSHGIDVILDDRKERPGVMFADMELIGVPHNIVIGDRNLDSEEVEYKNRRVGEKQMIKTSEIVEFLLSQIKR</sequence>
<keyword id="KW-0030">Aminoacyl-tRNA synthetase</keyword>
<keyword id="KW-0067">ATP-binding</keyword>
<keyword id="KW-0963">Cytoplasm</keyword>
<keyword id="KW-0436">Ligase</keyword>
<keyword id="KW-0547">Nucleotide-binding</keyword>
<keyword id="KW-0648">Protein biosynthesis</keyword>
<accession>A4TL66</accession>
<proteinExistence type="inferred from homology"/>
<dbReference type="EC" id="6.1.1.15" evidence="1"/>
<dbReference type="EMBL" id="CP000668">
    <property type="protein sequence ID" value="ABP40028.1"/>
    <property type="molecule type" value="Genomic_DNA"/>
</dbReference>
<dbReference type="RefSeq" id="WP_011906276.1">
    <property type="nucleotide sequence ID" value="NZ_CP009715.1"/>
</dbReference>
<dbReference type="SMR" id="A4TL66"/>
<dbReference type="KEGG" id="ypp:YPDSF_1643"/>
<dbReference type="PATRIC" id="fig|386656.14.peg.2119"/>
<dbReference type="GO" id="GO:0005829">
    <property type="term" value="C:cytosol"/>
    <property type="evidence" value="ECO:0007669"/>
    <property type="project" value="TreeGrafter"/>
</dbReference>
<dbReference type="GO" id="GO:0002161">
    <property type="term" value="F:aminoacyl-tRNA deacylase activity"/>
    <property type="evidence" value="ECO:0007669"/>
    <property type="project" value="InterPro"/>
</dbReference>
<dbReference type="GO" id="GO:0005524">
    <property type="term" value="F:ATP binding"/>
    <property type="evidence" value="ECO:0007669"/>
    <property type="project" value="UniProtKB-UniRule"/>
</dbReference>
<dbReference type="GO" id="GO:0004827">
    <property type="term" value="F:proline-tRNA ligase activity"/>
    <property type="evidence" value="ECO:0007669"/>
    <property type="project" value="UniProtKB-UniRule"/>
</dbReference>
<dbReference type="GO" id="GO:0006433">
    <property type="term" value="P:prolyl-tRNA aminoacylation"/>
    <property type="evidence" value="ECO:0007669"/>
    <property type="project" value="UniProtKB-UniRule"/>
</dbReference>
<dbReference type="CDD" id="cd04334">
    <property type="entry name" value="ProRS-INS"/>
    <property type="match status" value="1"/>
</dbReference>
<dbReference type="CDD" id="cd00861">
    <property type="entry name" value="ProRS_anticodon_short"/>
    <property type="match status" value="1"/>
</dbReference>
<dbReference type="CDD" id="cd00779">
    <property type="entry name" value="ProRS_core_prok"/>
    <property type="match status" value="1"/>
</dbReference>
<dbReference type="FunFam" id="3.30.930.10:FF:000012">
    <property type="entry name" value="Proline--tRNA ligase"/>
    <property type="match status" value="1"/>
</dbReference>
<dbReference type="FunFam" id="3.30.930.10:FF:000097">
    <property type="entry name" value="Proline--tRNA ligase"/>
    <property type="match status" value="1"/>
</dbReference>
<dbReference type="FunFam" id="3.40.50.800:FF:000006">
    <property type="entry name" value="Proline--tRNA ligase"/>
    <property type="match status" value="1"/>
</dbReference>
<dbReference type="FunFam" id="3.90.960.10:FF:000001">
    <property type="entry name" value="Proline--tRNA ligase"/>
    <property type="match status" value="1"/>
</dbReference>
<dbReference type="Gene3D" id="3.40.50.800">
    <property type="entry name" value="Anticodon-binding domain"/>
    <property type="match status" value="1"/>
</dbReference>
<dbReference type="Gene3D" id="3.30.930.10">
    <property type="entry name" value="Bira Bifunctional Protein, Domain 2"/>
    <property type="match status" value="2"/>
</dbReference>
<dbReference type="Gene3D" id="3.90.960.10">
    <property type="entry name" value="YbaK/aminoacyl-tRNA synthetase-associated domain"/>
    <property type="match status" value="1"/>
</dbReference>
<dbReference type="HAMAP" id="MF_01569">
    <property type="entry name" value="Pro_tRNA_synth_type1"/>
    <property type="match status" value="1"/>
</dbReference>
<dbReference type="InterPro" id="IPR002314">
    <property type="entry name" value="aa-tRNA-synt_IIb"/>
</dbReference>
<dbReference type="InterPro" id="IPR006195">
    <property type="entry name" value="aa-tRNA-synth_II"/>
</dbReference>
<dbReference type="InterPro" id="IPR045864">
    <property type="entry name" value="aa-tRNA-synth_II/BPL/LPL"/>
</dbReference>
<dbReference type="InterPro" id="IPR004154">
    <property type="entry name" value="Anticodon-bd"/>
</dbReference>
<dbReference type="InterPro" id="IPR036621">
    <property type="entry name" value="Anticodon-bd_dom_sf"/>
</dbReference>
<dbReference type="InterPro" id="IPR002316">
    <property type="entry name" value="Pro-tRNA-ligase_IIa"/>
</dbReference>
<dbReference type="InterPro" id="IPR004500">
    <property type="entry name" value="Pro-tRNA-synth_IIa_bac-type"/>
</dbReference>
<dbReference type="InterPro" id="IPR023717">
    <property type="entry name" value="Pro-tRNA-Synthase_IIa_type1"/>
</dbReference>
<dbReference type="InterPro" id="IPR050062">
    <property type="entry name" value="Pro-tRNA_synthetase"/>
</dbReference>
<dbReference type="InterPro" id="IPR044140">
    <property type="entry name" value="ProRS_anticodon_short"/>
</dbReference>
<dbReference type="InterPro" id="IPR033730">
    <property type="entry name" value="ProRS_core_prok"/>
</dbReference>
<dbReference type="InterPro" id="IPR036754">
    <property type="entry name" value="YbaK/aa-tRNA-synt-asso_dom_sf"/>
</dbReference>
<dbReference type="InterPro" id="IPR007214">
    <property type="entry name" value="YbaK/aa-tRNA-synth-assoc-dom"/>
</dbReference>
<dbReference type="NCBIfam" id="NF006625">
    <property type="entry name" value="PRK09194.1"/>
    <property type="match status" value="1"/>
</dbReference>
<dbReference type="NCBIfam" id="TIGR00409">
    <property type="entry name" value="proS_fam_II"/>
    <property type="match status" value="1"/>
</dbReference>
<dbReference type="PANTHER" id="PTHR42753">
    <property type="entry name" value="MITOCHONDRIAL RIBOSOME PROTEIN L39/PROLYL-TRNA LIGASE FAMILY MEMBER"/>
    <property type="match status" value="1"/>
</dbReference>
<dbReference type="PANTHER" id="PTHR42753:SF2">
    <property type="entry name" value="PROLINE--TRNA LIGASE"/>
    <property type="match status" value="1"/>
</dbReference>
<dbReference type="Pfam" id="PF03129">
    <property type="entry name" value="HGTP_anticodon"/>
    <property type="match status" value="1"/>
</dbReference>
<dbReference type="Pfam" id="PF00587">
    <property type="entry name" value="tRNA-synt_2b"/>
    <property type="match status" value="1"/>
</dbReference>
<dbReference type="Pfam" id="PF04073">
    <property type="entry name" value="tRNA_edit"/>
    <property type="match status" value="1"/>
</dbReference>
<dbReference type="PIRSF" id="PIRSF001535">
    <property type="entry name" value="ProRS_1"/>
    <property type="match status" value="1"/>
</dbReference>
<dbReference type="PRINTS" id="PR01046">
    <property type="entry name" value="TRNASYNTHPRO"/>
</dbReference>
<dbReference type="SUPFAM" id="SSF52954">
    <property type="entry name" value="Class II aaRS ABD-related"/>
    <property type="match status" value="1"/>
</dbReference>
<dbReference type="SUPFAM" id="SSF55681">
    <property type="entry name" value="Class II aaRS and biotin synthetases"/>
    <property type="match status" value="1"/>
</dbReference>
<dbReference type="SUPFAM" id="SSF55826">
    <property type="entry name" value="YbaK/ProRS associated domain"/>
    <property type="match status" value="1"/>
</dbReference>
<dbReference type="PROSITE" id="PS50862">
    <property type="entry name" value="AA_TRNA_LIGASE_II"/>
    <property type="match status" value="1"/>
</dbReference>
<evidence type="ECO:0000255" key="1">
    <source>
        <dbReference type="HAMAP-Rule" id="MF_01569"/>
    </source>
</evidence>
<feature type="chain" id="PRO_1000069175" description="Proline--tRNA ligase">
    <location>
        <begin position="1"/>
        <end position="572"/>
    </location>
</feature>
<organism>
    <name type="scientific">Yersinia pestis (strain Pestoides F)</name>
    <dbReference type="NCBI Taxonomy" id="386656"/>
    <lineage>
        <taxon>Bacteria</taxon>
        <taxon>Pseudomonadati</taxon>
        <taxon>Pseudomonadota</taxon>
        <taxon>Gammaproteobacteria</taxon>
        <taxon>Enterobacterales</taxon>
        <taxon>Yersiniaceae</taxon>
        <taxon>Yersinia</taxon>
    </lineage>
</organism>
<name>SYP_YERPP</name>
<comment type="function">
    <text evidence="1">Catalyzes the attachment of proline to tRNA(Pro) in a two-step reaction: proline is first activated by ATP to form Pro-AMP and then transferred to the acceptor end of tRNA(Pro). As ProRS can inadvertently accommodate and process non-cognate amino acids such as alanine and cysteine, to avoid such errors it has two additional distinct editing activities against alanine. One activity is designated as 'pretransfer' editing and involves the tRNA(Pro)-independent hydrolysis of activated Ala-AMP. The other activity is designated 'posttransfer' editing and involves deacylation of mischarged Ala-tRNA(Pro). The misacylated Cys-tRNA(Pro) is not edited by ProRS.</text>
</comment>
<comment type="catalytic activity">
    <reaction evidence="1">
        <text>tRNA(Pro) + L-proline + ATP = L-prolyl-tRNA(Pro) + AMP + diphosphate</text>
        <dbReference type="Rhea" id="RHEA:14305"/>
        <dbReference type="Rhea" id="RHEA-COMP:9700"/>
        <dbReference type="Rhea" id="RHEA-COMP:9702"/>
        <dbReference type="ChEBI" id="CHEBI:30616"/>
        <dbReference type="ChEBI" id="CHEBI:33019"/>
        <dbReference type="ChEBI" id="CHEBI:60039"/>
        <dbReference type="ChEBI" id="CHEBI:78442"/>
        <dbReference type="ChEBI" id="CHEBI:78532"/>
        <dbReference type="ChEBI" id="CHEBI:456215"/>
        <dbReference type="EC" id="6.1.1.15"/>
    </reaction>
</comment>
<comment type="subunit">
    <text evidence="1">Homodimer.</text>
</comment>
<comment type="subcellular location">
    <subcellularLocation>
        <location evidence="1">Cytoplasm</location>
    </subcellularLocation>
</comment>
<comment type="domain">
    <text evidence="1">Consists of three domains: the N-terminal catalytic domain, the editing domain and the C-terminal anticodon-binding domain.</text>
</comment>
<comment type="similarity">
    <text evidence="1">Belongs to the class-II aminoacyl-tRNA synthetase family. ProS type 1 subfamily.</text>
</comment>